<name>TRUB_STRPB</name>
<dbReference type="EC" id="5.4.99.25" evidence="1"/>
<dbReference type="EMBL" id="CP000261">
    <property type="protein sequence ID" value="ABF36073.1"/>
    <property type="molecule type" value="Genomic_DNA"/>
</dbReference>
<dbReference type="SMR" id="Q1JBI5"/>
<dbReference type="KEGG" id="spj:MGAS2096_Spy1021"/>
<dbReference type="HOGENOM" id="CLU_032087_0_1_9"/>
<dbReference type="GO" id="GO:0003723">
    <property type="term" value="F:RNA binding"/>
    <property type="evidence" value="ECO:0007669"/>
    <property type="project" value="InterPro"/>
</dbReference>
<dbReference type="GO" id="GO:0160148">
    <property type="term" value="F:tRNA pseudouridine(55) synthase activity"/>
    <property type="evidence" value="ECO:0007669"/>
    <property type="project" value="UniProtKB-EC"/>
</dbReference>
<dbReference type="GO" id="GO:1990481">
    <property type="term" value="P:mRNA pseudouridine synthesis"/>
    <property type="evidence" value="ECO:0007669"/>
    <property type="project" value="TreeGrafter"/>
</dbReference>
<dbReference type="GO" id="GO:0031119">
    <property type="term" value="P:tRNA pseudouridine synthesis"/>
    <property type="evidence" value="ECO:0007669"/>
    <property type="project" value="UniProtKB-UniRule"/>
</dbReference>
<dbReference type="CDD" id="cd02573">
    <property type="entry name" value="PseudoU_synth_EcTruB"/>
    <property type="match status" value="1"/>
</dbReference>
<dbReference type="FunFam" id="3.30.2350.10:FF:000011">
    <property type="entry name" value="tRNA pseudouridine synthase B"/>
    <property type="match status" value="1"/>
</dbReference>
<dbReference type="Gene3D" id="3.30.2350.10">
    <property type="entry name" value="Pseudouridine synthase"/>
    <property type="match status" value="1"/>
</dbReference>
<dbReference type="HAMAP" id="MF_01080">
    <property type="entry name" value="TruB_bact"/>
    <property type="match status" value="1"/>
</dbReference>
<dbReference type="InterPro" id="IPR020103">
    <property type="entry name" value="PsdUridine_synth_cat_dom_sf"/>
</dbReference>
<dbReference type="InterPro" id="IPR002501">
    <property type="entry name" value="PsdUridine_synth_N"/>
</dbReference>
<dbReference type="InterPro" id="IPR014780">
    <property type="entry name" value="tRNA_psdUridine_synth_TruB"/>
</dbReference>
<dbReference type="InterPro" id="IPR032819">
    <property type="entry name" value="TruB_C"/>
</dbReference>
<dbReference type="NCBIfam" id="TIGR00431">
    <property type="entry name" value="TruB"/>
    <property type="match status" value="1"/>
</dbReference>
<dbReference type="PANTHER" id="PTHR13767:SF2">
    <property type="entry name" value="PSEUDOURIDYLATE SYNTHASE TRUB1"/>
    <property type="match status" value="1"/>
</dbReference>
<dbReference type="PANTHER" id="PTHR13767">
    <property type="entry name" value="TRNA-PSEUDOURIDINE SYNTHASE"/>
    <property type="match status" value="1"/>
</dbReference>
<dbReference type="Pfam" id="PF16198">
    <property type="entry name" value="TruB_C_2"/>
    <property type="match status" value="1"/>
</dbReference>
<dbReference type="Pfam" id="PF01509">
    <property type="entry name" value="TruB_N"/>
    <property type="match status" value="1"/>
</dbReference>
<dbReference type="SUPFAM" id="SSF55120">
    <property type="entry name" value="Pseudouridine synthase"/>
    <property type="match status" value="1"/>
</dbReference>
<evidence type="ECO:0000255" key="1">
    <source>
        <dbReference type="HAMAP-Rule" id="MF_01080"/>
    </source>
</evidence>
<keyword id="KW-0413">Isomerase</keyword>
<keyword id="KW-0819">tRNA processing</keyword>
<organism>
    <name type="scientific">Streptococcus pyogenes serotype M12 (strain MGAS2096)</name>
    <dbReference type="NCBI Taxonomy" id="370553"/>
    <lineage>
        <taxon>Bacteria</taxon>
        <taxon>Bacillati</taxon>
        <taxon>Bacillota</taxon>
        <taxon>Bacilli</taxon>
        <taxon>Lactobacillales</taxon>
        <taxon>Streptococcaceae</taxon>
        <taxon>Streptococcus</taxon>
    </lineage>
</organism>
<reference key="1">
    <citation type="journal article" date="2006" name="Proc. Natl. Acad. Sci. U.S.A.">
        <title>Molecular genetic anatomy of inter- and intraserotype variation in the human bacterial pathogen group A Streptococcus.</title>
        <authorList>
            <person name="Beres S.B."/>
            <person name="Richter E.W."/>
            <person name="Nagiec M.J."/>
            <person name="Sumby P."/>
            <person name="Porcella S.F."/>
            <person name="DeLeo F.R."/>
            <person name="Musser J.M."/>
        </authorList>
    </citation>
    <scope>NUCLEOTIDE SEQUENCE [LARGE SCALE GENOMIC DNA]</scope>
    <source>
        <strain>MGAS2096</strain>
    </source>
</reference>
<feature type="chain" id="PRO_1000084697" description="tRNA pseudouridine synthase B">
    <location>
        <begin position="1"/>
        <end position="294"/>
    </location>
</feature>
<feature type="active site" description="Nucleophile" evidence="1">
    <location>
        <position position="39"/>
    </location>
</feature>
<gene>
    <name evidence="1" type="primary">truB</name>
    <name type="ordered locus">MGAS2096_Spy1021</name>
</gene>
<sequence>MINGIINLKKEAGMTSHDAVFKLRKLLQEKKIGHGGTLDPDVVGVLPIAVGKATRVIEYMTEAGKVYEGQVTLGYSTTTEDASGEVVARSSLPAVLTEELVDQTMTTFLGKITQTPPMYSAVKVNGRKLYEYARAGESVERPRREVTISLFERTSPLNFTEDGLCRFSFKVACSKGTYVRTLAVDLGRALGVESHMSFLQRSASAGLTLETAYTLGEIADMVSKQEMSFLLPIEYGVADLPKMVIDDTELTEISFGRRLSLPSQEPLLAAFHGEKVIAILEKRDQEYKPKKVLI</sequence>
<proteinExistence type="inferred from homology"/>
<accession>Q1JBI5</accession>
<protein>
    <recommendedName>
        <fullName evidence="1">tRNA pseudouridine synthase B</fullName>
        <ecNumber evidence="1">5.4.99.25</ecNumber>
    </recommendedName>
    <alternativeName>
        <fullName evidence="1">tRNA pseudouridine(55) synthase</fullName>
        <shortName evidence="1">Psi55 synthase</shortName>
    </alternativeName>
    <alternativeName>
        <fullName evidence="1">tRNA pseudouridylate synthase</fullName>
    </alternativeName>
    <alternativeName>
        <fullName evidence="1">tRNA-uridine isomerase</fullName>
    </alternativeName>
</protein>
<comment type="function">
    <text evidence="1">Responsible for synthesis of pseudouridine from uracil-55 in the psi GC loop of transfer RNAs.</text>
</comment>
<comment type="catalytic activity">
    <reaction evidence="1">
        <text>uridine(55) in tRNA = pseudouridine(55) in tRNA</text>
        <dbReference type="Rhea" id="RHEA:42532"/>
        <dbReference type="Rhea" id="RHEA-COMP:10101"/>
        <dbReference type="Rhea" id="RHEA-COMP:10102"/>
        <dbReference type="ChEBI" id="CHEBI:65314"/>
        <dbReference type="ChEBI" id="CHEBI:65315"/>
        <dbReference type="EC" id="5.4.99.25"/>
    </reaction>
</comment>
<comment type="similarity">
    <text evidence="1">Belongs to the pseudouridine synthase TruB family. Type 1 subfamily.</text>
</comment>